<proteinExistence type="inferred from homology"/>
<feature type="chain" id="PRO_0000122038" description="Serine--tRNA ligase">
    <location>
        <begin position="1"/>
        <end position="419"/>
    </location>
</feature>
<feature type="binding site" evidence="1">
    <location>
        <begin position="226"/>
        <end position="228"/>
    </location>
    <ligand>
        <name>L-serine</name>
        <dbReference type="ChEBI" id="CHEBI:33384"/>
    </ligand>
</feature>
<feature type="binding site" evidence="1">
    <location>
        <begin position="257"/>
        <end position="259"/>
    </location>
    <ligand>
        <name>ATP</name>
        <dbReference type="ChEBI" id="CHEBI:30616"/>
    </ligand>
</feature>
<feature type="binding site" evidence="1">
    <location>
        <position position="273"/>
    </location>
    <ligand>
        <name>ATP</name>
        <dbReference type="ChEBI" id="CHEBI:30616"/>
    </ligand>
</feature>
<feature type="binding site" evidence="1">
    <location>
        <position position="280"/>
    </location>
    <ligand>
        <name>L-serine</name>
        <dbReference type="ChEBI" id="CHEBI:33384"/>
    </ligand>
</feature>
<feature type="binding site" evidence="1">
    <location>
        <begin position="344"/>
        <end position="347"/>
    </location>
    <ligand>
        <name>ATP</name>
        <dbReference type="ChEBI" id="CHEBI:30616"/>
    </ligand>
</feature>
<feature type="binding site" evidence="1">
    <location>
        <position position="379"/>
    </location>
    <ligand>
        <name>L-serine</name>
        <dbReference type="ChEBI" id="CHEBI:33384"/>
    </ligand>
</feature>
<keyword id="KW-0030">Aminoacyl-tRNA synthetase</keyword>
<keyword id="KW-0067">ATP-binding</keyword>
<keyword id="KW-0963">Cytoplasm</keyword>
<keyword id="KW-0436">Ligase</keyword>
<keyword id="KW-0547">Nucleotide-binding</keyword>
<keyword id="KW-0648">Protein biosynthesis</keyword>
<keyword id="KW-1185">Reference proteome</keyword>
<accession>Q8FLY5</accession>
<protein>
    <recommendedName>
        <fullName evidence="1">Serine--tRNA ligase</fullName>
        <ecNumber evidence="1">6.1.1.11</ecNumber>
    </recommendedName>
    <alternativeName>
        <fullName evidence="1">Seryl-tRNA synthetase</fullName>
        <shortName evidence="1">SerRS</shortName>
    </alternativeName>
    <alternativeName>
        <fullName evidence="1">Seryl-tRNA(Ser/Sec) synthetase</fullName>
    </alternativeName>
</protein>
<comment type="function">
    <text evidence="1">Catalyzes the attachment of serine to tRNA(Ser). Is also able to aminoacylate tRNA(Sec) with serine, to form the misacylated tRNA L-seryl-tRNA(Sec), which will be further converted into selenocysteinyl-tRNA(Sec).</text>
</comment>
<comment type="catalytic activity">
    <reaction evidence="1">
        <text>tRNA(Ser) + L-serine + ATP = L-seryl-tRNA(Ser) + AMP + diphosphate + H(+)</text>
        <dbReference type="Rhea" id="RHEA:12292"/>
        <dbReference type="Rhea" id="RHEA-COMP:9669"/>
        <dbReference type="Rhea" id="RHEA-COMP:9703"/>
        <dbReference type="ChEBI" id="CHEBI:15378"/>
        <dbReference type="ChEBI" id="CHEBI:30616"/>
        <dbReference type="ChEBI" id="CHEBI:33019"/>
        <dbReference type="ChEBI" id="CHEBI:33384"/>
        <dbReference type="ChEBI" id="CHEBI:78442"/>
        <dbReference type="ChEBI" id="CHEBI:78533"/>
        <dbReference type="ChEBI" id="CHEBI:456215"/>
        <dbReference type="EC" id="6.1.1.11"/>
    </reaction>
</comment>
<comment type="catalytic activity">
    <reaction evidence="1">
        <text>tRNA(Sec) + L-serine + ATP = L-seryl-tRNA(Sec) + AMP + diphosphate + H(+)</text>
        <dbReference type="Rhea" id="RHEA:42580"/>
        <dbReference type="Rhea" id="RHEA-COMP:9742"/>
        <dbReference type="Rhea" id="RHEA-COMP:10128"/>
        <dbReference type="ChEBI" id="CHEBI:15378"/>
        <dbReference type="ChEBI" id="CHEBI:30616"/>
        <dbReference type="ChEBI" id="CHEBI:33019"/>
        <dbReference type="ChEBI" id="CHEBI:33384"/>
        <dbReference type="ChEBI" id="CHEBI:78442"/>
        <dbReference type="ChEBI" id="CHEBI:78533"/>
        <dbReference type="ChEBI" id="CHEBI:456215"/>
        <dbReference type="EC" id="6.1.1.11"/>
    </reaction>
</comment>
<comment type="pathway">
    <text evidence="1">Aminoacyl-tRNA biosynthesis; selenocysteinyl-tRNA(Sec) biosynthesis; L-seryl-tRNA(Sec) from L-serine and tRNA(Sec): step 1/1.</text>
</comment>
<comment type="subunit">
    <text evidence="1">Homodimer. The tRNA molecule binds across the dimer.</text>
</comment>
<comment type="subcellular location">
    <subcellularLocation>
        <location evidence="1">Cytoplasm</location>
    </subcellularLocation>
</comment>
<comment type="domain">
    <text evidence="1">Consists of two distinct domains, a catalytic core and a N-terminal extension that is involved in tRNA binding.</text>
</comment>
<comment type="similarity">
    <text evidence="1">Belongs to the class-II aminoacyl-tRNA synthetase family. Type-1 seryl-tRNA synthetase subfamily.</text>
</comment>
<comment type="sequence caution" evidence="2">
    <conflict type="erroneous initiation">
        <sequence resource="EMBL-CDS" id="BAC19534"/>
    </conflict>
</comment>
<gene>
    <name evidence="1" type="primary">serS</name>
    <name type="ordered locus">CE2724</name>
</gene>
<reference key="1">
    <citation type="journal article" date="2003" name="Genome Res.">
        <title>Comparative complete genome sequence analysis of the amino acid replacements responsible for the thermostability of Corynebacterium efficiens.</title>
        <authorList>
            <person name="Nishio Y."/>
            <person name="Nakamura Y."/>
            <person name="Kawarabayasi Y."/>
            <person name="Usuda Y."/>
            <person name="Kimura E."/>
            <person name="Sugimoto S."/>
            <person name="Matsui K."/>
            <person name="Yamagishi A."/>
            <person name="Kikuchi H."/>
            <person name="Ikeo K."/>
            <person name="Gojobori T."/>
        </authorList>
    </citation>
    <scope>NUCLEOTIDE SEQUENCE [LARGE SCALE GENOMIC DNA]</scope>
    <source>
        <strain>DSM 44549 / YS-314 / AJ 12310 / JCM 11189 / NBRC 100395</strain>
    </source>
</reference>
<sequence>MIDLKFLRDNPDVVRTSQITRGEDPALVDELLSADEARRQAIQVADELRSEQKAFGKKIGQASPEDRPALLEGSNELKAKVKEAEAAQETAEQRVHDLQMKLSNVVEGAPAGGEDDFVVLEHVGEPRTFDFEPKDHLELGESLGLIDMKRGTKVSGARFYYLTGDGAMLQLGMLTLAAQKATAAGFTMMIPPVLVRPEIMAGTGFLGDHSEEIYYLERDDMYLVGTSEVALAGYHKDEIIDLNNGPVKYAGWSSCFRREAGSYGKDTRGILRVHQFDKVEMFVYCKPEEAEEQHRRLLEMEKDMLAAVEVPYRIIDVAGGDLGASAARKFDTEAWVPTQGTYRELTSTSNCTTFQGRRLQTRYRDENGKPQIAATLNGTLATTRWLVAILENNQQADGSVIVPEALRPFVGKDVLEPVK</sequence>
<dbReference type="EC" id="6.1.1.11" evidence="1"/>
<dbReference type="EMBL" id="BA000035">
    <property type="protein sequence ID" value="BAC19534.1"/>
    <property type="status" value="ALT_INIT"/>
    <property type="molecule type" value="Genomic_DNA"/>
</dbReference>
<dbReference type="RefSeq" id="WP_006768908.1">
    <property type="nucleotide sequence ID" value="NC_004369.1"/>
</dbReference>
<dbReference type="SMR" id="Q8FLY5"/>
<dbReference type="STRING" id="196164.gene:10743172"/>
<dbReference type="KEGG" id="cef:CE2724"/>
<dbReference type="eggNOG" id="COG0172">
    <property type="taxonomic scope" value="Bacteria"/>
</dbReference>
<dbReference type="HOGENOM" id="CLU_023797_0_1_11"/>
<dbReference type="OrthoDB" id="9804647at2"/>
<dbReference type="UniPathway" id="UPA00906">
    <property type="reaction ID" value="UER00895"/>
</dbReference>
<dbReference type="Proteomes" id="UP000001409">
    <property type="component" value="Chromosome"/>
</dbReference>
<dbReference type="GO" id="GO:0005737">
    <property type="term" value="C:cytoplasm"/>
    <property type="evidence" value="ECO:0007669"/>
    <property type="project" value="UniProtKB-SubCell"/>
</dbReference>
<dbReference type="GO" id="GO:0005524">
    <property type="term" value="F:ATP binding"/>
    <property type="evidence" value="ECO:0007669"/>
    <property type="project" value="UniProtKB-UniRule"/>
</dbReference>
<dbReference type="GO" id="GO:0004828">
    <property type="term" value="F:serine-tRNA ligase activity"/>
    <property type="evidence" value="ECO:0007669"/>
    <property type="project" value="UniProtKB-UniRule"/>
</dbReference>
<dbReference type="GO" id="GO:0016260">
    <property type="term" value="P:selenocysteine biosynthetic process"/>
    <property type="evidence" value="ECO:0007669"/>
    <property type="project" value="UniProtKB-UniRule"/>
</dbReference>
<dbReference type="GO" id="GO:0006434">
    <property type="term" value="P:seryl-tRNA aminoacylation"/>
    <property type="evidence" value="ECO:0007669"/>
    <property type="project" value="UniProtKB-UniRule"/>
</dbReference>
<dbReference type="CDD" id="cd00770">
    <property type="entry name" value="SerRS_core"/>
    <property type="match status" value="1"/>
</dbReference>
<dbReference type="FunFam" id="1.10.287.40:FF:000004">
    <property type="entry name" value="Serine--tRNA ligase"/>
    <property type="match status" value="1"/>
</dbReference>
<dbReference type="Gene3D" id="3.30.930.10">
    <property type="entry name" value="Bira Bifunctional Protein, Domain 2"/>
    <property type="match status" value="1"/>
</dbReference>
<dbReference type="Gene3D" id="1.10.287.40">
    <property type="entry name" value="Serine-tRNA synthetase, tRNA binding domain"/>
    <property type="match status" value="1"/>
</dbReference>
<dbReference type="HAMAP" id="MF_00176">
    <property type="entry name" value="Ser_tRNA_synth_type1"/>
    <property type="match status" value="1"/>
</dbReference>
<dbReference type="InterPro" id="IPR002314">
    <property type="entry name" value="aa-tRNA-synt_IIb"/>
</dbReference>
<dbReference type="InterPro" id="IPR006195">
    <property type="entry name" value="aa-tRNA-synth_II"/>
</dbReference>
<dbReference type="InterPro" id="IPR045864">
    <property type="entry name" value="aa-tRNA-synth_II/BPL/LPL"/>
</dbReference>
<dbReference type="InterPro" id="IPR002317">
    <property type="entry name" value="Ser-tRNA-ligase_type_1"/>
</dbReference>
<dbReference type="InterPro" id="IPR015866">
    <property type="entry name" value="Ser-tRNA-synth_1_N"/>
</dbReference>
<dbReference type="InterPro" id="IPR042103">
    <property type="entry name" value="SerRS_1_N_sf"/>
</dbReference>
<dbReference type="InterPro" id="IPR033729">
    <property type="entry name" value="SerRS_core"/>
</dbReference>
<dbReference type="InterPro" id="IPR010978">
    <property type="entry name" value="tRNA-bd_arm"/>
</dbReference>
<dbReference type="NCBIfam" id="TIGR00414">
    <property type="entry name" value="serS"/>
    <property type="match status" value="1"/>
</dbReference>
<dbReference type="PANTHER" id="PTHR11778">
    <property type="entry name" value="SERYL-TRNA SYNTHETASE"/>
    <property type="match status" value="1"/>
</dbReference>
<dbReference type="Pfam" id="PF02403">
    <property type="entry name" value="Seryl_tRNA_N"/>
    <property type="match status" value="1"/>
</dbReference>
<dbReference type="Pfam" id="PF00587">
    <property type="entry name" value="tRNA-synt_2b"/>
    <property type="match status" value="1"/>
</dbReference>
<dbReference type="PIRSF" id="PIRSF001529">
    <property type="entry name" value="Ser-tRNA-synth_IIa"/>
    <property type="match status" value="1"/>
</dbReference>
<dbReference type="PRINTS" id="PR00981">
    <property type="entry name" value="TRNASYNTHSER"/>
</dbReference>
<dbReference type="SUPFAM" id="SSF55681">
    <property type="entry name" value="Class II aaRS and biotin synthetases"/>
    <property type="match status" value="1"/>
</dbReference>
<dbReference type="SUPFAM" id="SSF46589">
    <property type="entry name" value="tRNA-binding arm"/>
    <property type="match status" value="1"/>
</dbReference>
<dbReference type="PROSITE" id="PS50862">
    <property type="entry name" value="AA_TRNA_LIGASE_II"/>
    <property type="match status" value="1"/>
</dbReference>
<organism>
    <name type="scientific">Corynebacterium efficiens (strain DSM 44549 / YS-314 / AJ 12310 / JCM 11189 / NBRC 100395)</name>
    <dbReference type="NCBI Taxonomy" id="196164"/>
    <lineage>
        <taxon>Bacteria</taxon>
        <taxon>Bacillati</taxon>
        <taxon>Actinomycetota</taxon>
        <taxon>Actinomycetes</taxon>
        <taxon>Mycobacteriales</taxon>
        <taxon>Corynebacteriaceae</taxon>
        <taxon>Corynebacterium</taxon>
    </lineage>
</organism>
<evidence type="ECO:0000255" key="1">
    <source>
        <dbReference type="HAMAP-Rule" id="MF_00176"/>
    </source>
</evidence>
<evidence type="ECO:0000305" key="2"/>
<name>SYS_COREF</name>